<reference key="1">
    <citation type="journal article" date="2008" name="Genomics">
        <title>Characterization of ST-4821 complex, a unique Neisseria meningitidis clone.</title>
        <authorList>
            <person name="Peng J."/>
            <person name="Yang L."/>
            <person name="Yang F."/>
            <person name="Yang J."/>
            <person name="Yan Y."/>
            <person name="Nie H."/>
            <person name="Zhang X."/>
            <person name="Xiong Z."/>
            <person name="Jiang Y."/>
            <person name="Cheng F."/>
            <person name="Xu X."/>
            <person name="Chen S."/>
            <person name="Sun L."/>
            <person name="Li W."/>
            <person name="Shen Y."/>
            <person name="Shao Z."/>
            <person name="Liang X."/>
            <person name="Xu J."/>
            <person name="Jin Q."/>
        </authorList>
    </citation>
    <scope>NUCLEOTIDE SEQUENCE [LARGE SCALE GENOMIC DNA]</scope>
    <source>
        <strain>053442</strain>
    </source>
</reference>
<keyword id="KW-0378">Hydrolase</keyword>
<keyword id="KW-0479">Metal-binding</keyword>
<keyword id="KW-0862">Zinc</keyword>
<dbReference type="EC" id="3.1.2.6" evidence="1"/>
<dbReference type="EMBL" id="CP000381">
    <property type="protein sequence ID" value="ABX72417.1"/>
    <property type="molecule type" value="Genomic_DNA"/>
</dbReference>
<dbReference type="RefSeq" id="WP_002219913.1">
    <property type="nucleotide sequence ID" value="NC_010120.1"/>
</dbReference>
<dbReference type="SMR" id="A9M0M3"/>
<dbReference type="KEGG" id="nmn:NMCC_0208"/>
<dbReference type="HOGENOM" id="CLU_030571_4_1_4"/>
<dbReference type="UniPathway" id="UPA00619">
    <property type="reaction ID" value="UER00676"/>
</dbReference>
<dbReference type="Proteomes" id="UP000001177">
    <property type="component" value="Chromosome"/>
</dbReference>
<dbReference type="GO" id="GO:0004416">
    <property type="term" value="F:hydroxyacylglutathione hydrolase activity"/>
    <property type="evidence" value="ECO:0007669"/>
    <property type="project" value="UniProtKB-UniRule"/>
</dbReference>
<dbReference type="GO" id="GO:0046872">
    <property type="term" value="F:metal ion binding"/>
    <property type="evidence" value="ECO:0007669"/>
    <property type="project" value="UniProtKB-KW"/>
</dbReference>
<dbReference type="GO" id="GO:0019243">
    <property type="term" value="P:methylglyoxal catabolic process to D-lactate via S-lactoyl-glutathione"/>
    <property type="evidence" value="ECO:0007669"/>
    <property type="project" value="InterPro"/>
</dbReference>
<dbReference type="CDD" id="cd07723">
    <property type="entry name" value="hydroxyacylglutathione_hydrolase_MBL-fold"/>
    <property type="match status" value="1"/>
</dbReference>
<dbReference type="Gene3D" id="3.60.15.10">
    <property type="entry name" value="Ribonuclease Z/Hydroxyacylglutathione hydrolase-like"/>
    <property type="match status" value="1"/>
</dbReference>
<dbReference type="HAMAP" id="MF_01374">
    <property type="entry name" value="Glyoxalase_2"/>
    <property type="match status" value="1"/>
</dbReference>
<dbReference type="InterPro" id="IPR035680">
    <property type="entry name" value="Clx_II_MBL"/>
</dbReference>
<dbReference type="InterPro" id="IPR050110">
    <property type="entry name" value="Glyoxalase_II_hydrolase"/>
</dbReference>
<dbReference type="InterPro" id="IPR032282">
    <property type="entry name" value="HAGH_C"/>
</dbReference>
<dbReference type="InterPro" id="IPR017782">
    <property type="entry name" value="Hydroxyacylglutathione_Hdrlase"/>
</dbReference>
<dbReference type="InterPro" id="IPR001279">
    <property type="entry name" value="Metallo-B-lactamas"/>
</dbReference>
<dbReference type="InterPro" id="IPR036866">
    <property type="entry name" value="RibonucZ/Hydroxyglut_hydro"/>
</dbReference>
<dbReference type="NCBIfam" id="TIGR03413">
    <property type="entry name" value="GSH_gloB"/>
    <property type="match status" value="1"/>
</dbReference>
<dbReference type="PANTHER" id="PTHR43705">
    <property type="entry name" value="HYDROXYACYLGLUTATHIONE HYDROLASE"/>
    <property type="match status" value="1"/>
</dbReference>
<dbReference type="PANTHER" id="PTHR43705:SF1">
    <property type="entry name" value="HYDROXYACYLGLUTATHIONE HYDROLASE GLOB"/>
    <property type="match status" value="1"/>
</dbReference>
<dbReference type="Pfam" id="PF16123">
    <property type="entry name" value="HAGH_C"/>
    <property type="match status" value="1"/>
</dbReference>
<dbReference type="Pfam" id="PF00753">
    <property type="entry name" value="Lactamase_B"/>
    <property type="match status" value="1"/>
</dbReference>
<dbReference type="SMART" id="SM00849">
    <property type="entry name" value="Lactamase_B"/>
    <property type="match status" value="1"/>
</dbReference>
<dbReference type="SUPFAM" id="SSF56281">
    <property type="entry name" value="Metallo-hydrolase/oxidoreductase"/>
    <property type="match status" value="1"/>
</dbReference>
<proteinExistence type="inferred from homology"/>
<evidence type="ECO:0000255" key="1">
    <source>
        <dbReference type="HAMAP-Rule" id="MF_01374"/>
    </source>
</evidence>
<gene>
    <name evidence="1" type="primary">gloB</name>
    <name type="ordered locus">NMCC_0208</name>
</gene>
<accession>A9M0M3</accession>
<name>GLO2_NEIM0</name>
<organism>
    <name type="scientific">Neisseria meningitidis serogroup C (strain 053442)</name>
    <dbReference type="NCBI Taxonomy" id="374833"/>
    <lineage>
        <taxon>Bacteria</taxon>
        <taxon>Pseudomonadati</taxon>
        <taxon>Pseudomonadota</taxon>
        <taxon>Betaproteobacteria</taxon>
        <taxon>Neisseriales</taxon>
        <taxon>Neisseriaceae</taxon>
        <taxon>Neisseria</taxon>
    </lineage>
</organism>
<protein>
    <recommendedName>
        <fullName evidence="1">Hydroxyacylglutathione hydrolase</fullName>
        <ecNumber evidence="1">3.1.2.6</ecNumber>
    </recommendedName>
    <alternativeName>
        <fullName evidence="1">Glyoxalase II</fullName>
        <shortName evidence="1">Glx II</shortName>
    </alternativeName>
</protein>
<feature type="chain" id="PRO_1000087285" description="Hydroxyacylglutathione hydrolase">
    <location>
        <begin position="1"/>
        <end position="252"/>
    </location>
</feature>
<feature type="binding site" evidence="1">
    <location>
        <position position="52"/>
    </location>
    <ligand>
        <name>Zn(2+)</name>
        <dbReference type="ChEBI" id="CHEBI:29105"/>
        <label>1</label>
    </ligand>
</feature>
<feature type="binding site" evidence="1">
    <location>
        <position position="54"/>
    </location>
    <ligand>
        <name>Zn(2+)</name>
        <dbReference type="ChEBI" id="CHEBI:29105"/>
        <label>1</label>
    </ligand>
</feature>
<feature type="binding site" evidence="1">
    <location>
        <position position="56"/>
    </location>
    <ligand>
        <name>Zn(2+)</name>
        <dbReference type="ChEBI" id="CHEBI:29105"/>
        <label>2</label>
    </ligand>
</feature>
<feature type="binding site" evidence="1">
    <location>
        <position position="57"/>
    </location>
    <ligand>
        <name>Zn(2+)</name>
        <dbReference type="ChEBI" id="CHEBI:29105"/>
        <label>2</label>
    </ligand>
</feature>
<feature type="binding site" evidence="1">
    <location>
        <position position="107"/>
    </location>
    <ligand>
        <name>Zn(2+)</name>
        <dbReference type="ChEBI" id="CHEBI:29105"/>
        <label>1</label>
    </ligand>
</feature>
<feature type="binding site" evidence="1">
    <location>
        <position position="128"/>
    </location>
    <ligand>
        <name>Zn(2+)</name>
        <dbReference type="ChEBI" id="CHEBI:29105"/>
        <label>1</label>
    </ligand>
</feature>
<feature type="binding site" evidence="1">
    <location>
        <position position="128"/>
    </location>
    <ligand>
        <name>Zn(2+)</name>
        <dbReference type="ChEBI" id="CHEBI:29105"/>
        <label>2</label>
    </ligand>
</feature>
<feature type="binding site" evidence="1">
    <location>
        <position position="166"/>
    </location>
    <ligand>
        <name>Zn(2+)</name>
        <dbReference type="ChEBI" id="CHEBI:29105"/>
        <label>2</label>
    </ligand>
</feature>
<comment type="function">
    <text evidence="1">Thiolesterase that catalyzes the hydrolysis of S-D-lactoyl-glutathione to form glutathione and D-lactic acid.</text>
</comment>
<comment type="catalytic activity">
    <reaction evidence="1">
        <text>an S-(2-hydroxyacyl)glutathione + H2O = a 2-hydroxy carboxylate + glutathione + H(+)</text>
        <dbReference type="Rhea" id="RHEA:21864"/>
        <dbReference type="ChEBI" id="CHEBI:15377"/>
        <dbReference type="ChEBI" id="CHEBI:15378"/>
        <dbReference type="ChEBI" id="CHEBI:57925"/>
        <dbReference type="ChEBI" id="CHEBI:58896"/>
        <dbReference type="ChEBI" id="CHEBI:71261"/>
        <dbReference type="EC" id="3.1.2.6"/>
    </reaction>
</comment>
<comment type="cofactor">
    <cofactor evidence="1">
        <name>Zn(2+)</name>
        <dbReference type="ChEBI" id="CHEBI:29105"/>
    </cofactor>
    <text evidence="1">Binds 2 Zn(2+) ions per subunit.</text>
</comment>
<comment type="pathway">
    <text evidence="1">Secondary metabolite metabolism; methylglyoxal degradation; (R)-lactate from methylglyoxal: step 2/2.</text>
</comment>
<comment type="subunit">
    <text evidence="1">Monomer.</text>
</comment>
<comment type="similarity">
    <text evidence="1">Belongs to the metallo-beta-lactamase superfamily. Glyoxalase II family.</text>
</comment>
<sequence length="252" mass="28155">MKITPVKALTDNYIWMIQHGNHAVCVDPSEPSPVLEFLVRNRLMLAQTWVTHPHPDHEGGAAALWRGYMESPVYGESDIEAATHTVTAGTQFTFGDGQVTVWATPGHTDRHTSYLLETSDGIHVFCGDTLFSAGCGRVFTGTIEQLYDSFQRFNRLPENTLFYPAHEYTAANLRFAAHIEPDNADIQTALKAAAHTPTLPVTLAHERRVNPFLRVDLPHVRDRAEALSGKTLNSSLDTFVALRELKNQYRTK</sequence>